<name>HIS1_POLNA</name>
<accession>A1VK36</accession>
<organism>
    <name type="scientific">Polaromonas naphthalenivorans (strain CJ2)</name>
    <dbReference type="NCBI Taxonomy" id="365044"/>
    <lineage>
        <taxon>Bacteria</taxon>
        <taxon>Pseudomonadati</taxon>
        <taxon>Pseudomonadota</taxon>
        <taxon>Betaproteobacteria</taxon>
        <taxon>Burkholderiales</taxon>
        <taxon>Comamonadaceae</taxon>
        <taxon>Polaromonas</taxon>
    </lineage>
</organism>
<protein>
    <recommendedName>
        <fullName evidence="1">ATP phosphoribosyltransferase</fullName>
        <shortName evidence="1">ATP-PRT</shortName>
        <shortName evidence="1">ATP-PRTase</shortName>
        <ecNumber evidence="1">2.4.2.17</ecNumber>
    </recommendedName>
</protein>
<sequence>MITLALSKGRIFDDILPLLRTAGIEVLDDPEKSRKLILGTNQPDLRVVLVRATDVPTYVQYGGADIGVVGKDTLLESGSQGLYQPLDLQIAKCRISVAVRQGFDYAAAVKQGSRLKVATKYVAISRDFFATKGVHVDLIKLYGSMELAPLTGLADAIVDLVSTGSTLKANHLIEVERIMDISSHLVVNQTALKLKQAPIRKLIDAFSLACAQAAAKQ</sequence>
<dbReference type="EC" id="2.4.2.17" evidence="1"/>
<dbReference type="EMBL" id="CP000529">
    <property type="protein sequence ID" value="ABM36014.1"/>
    <property type="molecule type" value="Genomic_DNA"/>
</dbReference>
<dbReference type="RefSeq" id="WP_011800109.1">
    <property type="nucleotide sequence ID" value="NC_008781.1"/>
</dbReference>
<dbReference type="SMR" id="A1VK36"/>
<dbReference type="STRING" id="365044.Pnap_0695"/>
<dbReference type="KEGG" id="pna:Pnap_0695"/>
<dbReference type="eggNOG" id="COG0040">
    <property type="taxonomic scope" value="Bacteria"/>
</dbReference>
<dbReference type="HOGENOM" id="CLU_038115_2_0_4"/>
<dbReference type="OrthoDB" id="9801867at2"/>
<dbReference type="UniPathway" id="UPA00031">
    <property type="reaction ID" value="UER00006"/>
</dbReference>
<dbReference type="Proteomes" id="UP000000644">
    <property type="component" value="Chromosome"/>
</dbReference>
<dbReference type="GO" id="GO:0005737">
    <property type="term" value="C:cytoplasm"/>
    <property type="evidence" value="ECO:0007669"/>
    <property type="project" value="UniProtKB-SubCell"/>
</dbReference>
<dbReference type="GO" id="GO:0005524">
    <property type="term" value="F:ATP binding"/>
    <property type="evidence" value="ECO:0007669"/>
    <property type="project" value="UniProtKB-KW"/>
</dbReference>
<dbReference type="GO" id="GO:0003879">
    <property type="term" value="F:ATP phosphoribosyltransferase activity"/>
    <property type="evidence" value="ECO:0007669"/>
    <property type="project" value="UniProtKB-UniRule"/>
</dbReference>
<dbReference type="GO" id="GO:0000105">
    <property type="term" value="P:L-histidine biosynthetic process"/>
    <property type="evidence" value="ECO:0007669"/>
    <property type="project" value="UniProtKB-UniRule"/>
</dbReference>
<dbReference type="CDD" id="cd13595">
    <property type="entry name" value="PBP2_HisGs"/>
    <property type="match status" value="1"/>
</dbReference>
<dbReference type="FunFam" id="3.40.190.10:FF:000011">
    <property type="entry name" value="ATP phosphoribosyltransferase"/>
    <property type="match status" value="1"/>
</dbReference>
<dbReference type="Gene3D" id="3.40.190.10">
    <property type="entry name" value="Periplasmic binding protein-like II"/>
    <property type="match status" value="2"/>
</dbReference>
<dbReference type="HAMAP" id="MF_01018">
    <property type="entry name" value="HisG_Short"/>
    <property type="match status" value="1"/>
</dbReference>
<dbReference type="InterPro" id="IPR013820">
    <property type="entry name" value="ATP_PRibTrfase_cat"/>
</dbReference>
<dbReference type="InterPro" id="IPR018198">
    <property type="entry name" value="ATP_PRibTrfase_CS"/>
</dbReference>
<dbReference type="InterPro" id="IPR001348">
    <property type="entry name" value="ATP_PRibTrfase_HisG"/>
</dbReference>
<dbReference type="InterPro" id="IPR024893">
    <property type="entry name" value="ATP_PRibTrfase_HisG_short"/>
</dbReference>
<dbReference type="NCBIfam" id="TIGR00070">
    <property type="entry name" value="hisG"/>
    <property type="match status" value="1"/>
</dbReference>
<dbReference type="PANTHER" id="PTHR21403:SF8">
    <property type="entry name" value="ATP PHOSPHORIBOSYLTRANSFERASE"/>
    <property type="match status" value="1"/>
</dbReference>
<dbReference type="PANTHER" id="PTHR21403">
    <property type="entry name" value="ATP PHOSPHORIBOSYLTRANSFERASE ATP-PRTASE"/>
    <property type="match status" value="1"/>
</dbReference>
<dbReference type="Pfam" id="PF01634">
    <property type="entry name" value="HisG"/>
    <property type="match status" value="1"/>
</dbReference>
<dbReference type="SUPFAM" id="SSF53850">
    <property type="entry name" value="Periplasmic binding protein-like II"/>
    <property type="match status" value="1"/>
</dbReference>
<dbReference type="PROSITE" id="PS01316">
    <property type="entry name" value="ATP_P_PHORIBOSYLTR"/>
    <property type="match status" value="1"/>
</dbReference>
<gene>
    <name evidence="1" type="primary">hisG</name>
    <name type="ordered locus">Pnap_0695</name>
</gene>
<comment type="function">
    <text evidence="1">Catalyzes the condensation of ATP and 5-phosphoribose 1-diphosphate to form N'-(5'-phosphoribosyl)-ATP (PR-ATP). Has a crucial role in the pathway because the rate of histidine biosynthesis seems to be controlled primarily by regulation of HisG enzymatic activity.</text>
</comment>
<comment type="catalytic activity">
    <reaction evidence="1">
        <text>1-(5-phospho-beta-D-ribosyl)-ATP + diphosphate = 5-phospho-alpha-D-ribose 1-diphosphate + ATP</text>
        <dbReference type="Rhea" id="RHEA:18473"/>
        <dbReference type="ChEBI" id="CHEBI:30616"/>
        <dbReference type="ChEBI" id="CHEBI:33019"/>
        <dbReference type="ChEBI" id="CHEBI:58017"/>
        <dbReference type="ChEBI" id="CHEBI:73183"/>
        <dbReference type="EC" id="2.4.2.17"/>
    </reaction>
</comment>
<comment type="pathway">
    <text evidence="1">Amino-acid biosynthesis; L-histidine biosynthesis; L-histidine from 5-phospho-alpha-D-ribose 1-diphosphate: step 1/9.</text>
</comment>
<comment type="subunit">
    <text evidence="1">Heteromultimer composed of HisG and HisZ subunits.</text>
</comment>
<comment type="subcellular location">
    <subcellularLocation>
        <location evidence="1">Cytoplasm</location>
    </subcellularLocation>
</comment>
<comment type="domain">
    <text>Lacks the C-terminal regulatory region which is replaced by HisZ.</text>
</comment>
<comment type="similarity">
    <text evidence="1">Belongs to the ATP phosphoribosyltransferase family. Short subfamily.</text>
</comment>
<feature type="chain" id="PRO_1000063291" description="ATP phosphoribosyltransferase">
    <location>
        <begin position="1"/>
        <end position="217"/>
    </location>
</feature>
<proteinExistence type="inferred from homology"/>
<keyword id="KW-0028">Amino-acid biosynthesis</keyword>
<keyword id="KW-0067">ATP-binding</keyword>
<keyword id="KW-0963">Cytoplasm</keyword>
<keyword id="KW-0328">Glycosyltransferase</keyword>
<keyword id="KW-0368">Histidine biosynthesis</keyword>
<keyword id="KW-0547">Nucleotide-binding</keyword>
<keyword id="KW-1185">Reference proteome</keyword>
<keyword id="KW-0808">Transferase</keyword>
<reference key="1">
    <citation type="journal article" date="2009" name="Environ. Microbiol.">
        <title>The genome of Polaromonas naphthalenivorans strain CJ2, isolated from coal tar-contaminated sediment, reveals physiological and metabolic versatility and evolution through extensive horizontal gene transfer.</title>
        <authorList>
            <person name="Yagi J.M."/>
            <person name="Sims D."/>
            <person name="Brettin T."/>
            <person name="Bruce D."/>
            <person name="Madsen E.L."/>
        </authorList>
    </citation>
    <scope>NUCLEOTIDE SEQUENCE [LARGE SCALE GENOMIC DNA]</scope>
    <source>
        <strain>CJ2</strain>
    </source>
</reference>
<evidence type="ECO:0000255" key="1">
    <source>
        <dbReference type="HAMAP-Rule" id="MF_01018"/>
    </source>
</evidence>